<feature type="chain" id="PRO_1000045183" description="UPF0270 protein YPDSF_0104">
    <location>
        <begin position="1"/>
        <end position="78"/>
    </location>
</feature>
<reference key="1">
    <citation type="submission" date="2007-02" db="EMBL/GenBank/DDBJ databases">
        <title>Complete sequence of chromosome of Yersinia pestis Pestoides F.</title>
        <authorList>
            <consortium name="US DOE Joint Genome Institute"/>
            <person name="Copeland A."/>
            <person name="Lucas S."/>
            <person name="Lapidus A."/>
            <person name="Barry K."/>
            <person name="Detter J.C."/>
            <person name="Glavina del Rio T."/>
            <person name="Hammon N."/>
            <person name="Israni S."/>
            <person name="Dalin E."/>
            <person name="Tice H."/>
            <person name="Pitluck S."/>
            <person name="Di Bartolo G."/>
            <person name="Chain P."/>
            <person name="Malfatti S."/>
            <person name="Shin M."/>
            <person name="Vergez L."/>
            <person name="Schmutz J."/>
            <person name="Larimer F."/>
            <person name="Land M."/>
            <person name="Hauser L."/>
            <person name="Worsham P."/>
            <person name="Chu M."/>
            <person name="Bearden S."/>
            <person name="Garcia E."/>
            <person name="Richardson P."/>
        </authorList>
    </citation>
    <scope>NUCLEOTIDE SEQUENCE [LARGE SCALE GENOMIC DNA]</scope>
    <source>
        <strain>Pestoides F</strain>
    </source>
</reference>
<proteinExistence type="inferred from homology"/>
<evidence type="ECO:0000255" key="1">
    <source>
        <dbReference type="HAMAP-Rule" id="MF_00690"/>
    </source>
</evidence>
<protein>
    <recommendedName>
        <fullName evidence="1">UPF0270 protein YPDSF_0104</fullName>
    </recommendedName>
</protein>
<gene>
    <name type="ordered locus">YPDSF_0104</name>
</gene>
<dbReference type="EMBL" id="CP000668">
    <property type="protein sequence ID" value="ABP38528.1"/>
    <property type="molecule type" value="Genomic_DNA"/>
</dbReference>
<dbReference type="RefSeq" id="WP_002212301.1">
    <property type="nucleotide sequence ID" value="NZ_CP009715.1"/>
</dbReference>
<dbReference type="SMR" id="A4TGW5"/>
<dbReference type="KEGG" id="ypp:YPDSF_0104"/>
<dbReference type="PATRIC" id="fig|386656.14.peg.463"/>
<dbReference type="Gene3D" id="1.10.10.610">
    <property type="entry name" value="YehU-like"/>
    <property type="match status" value="1"/>
</dbReference>
<dbReference type="HAMAP" id="MF_00690">
    <property type="entry name" value="UPF0270"/>
    <property type="match status" value="1"/>
</dbReference>
<dbReference type="InterPro" id="IPR010648">
    <property type="entry name" value="UPF0270"/>
</dbReference>
<dbReference type="InterPro" id="IPR036685">
    <property type="entry name" value="YehU-like_sf"/>
</dbReference>
<dbReference type="NCBIfam" id="NF003438">
    <property type="entry name" value="PRK04966.1"/>
    <property type="match status" value="1"/>
</dbReference>
<dbReference type="Pfam" id="PF06794">
    <property type="entry name" value="UPF0270"/>
    <property type="match status" value="1"/>
</dbReference>
<dbReference type="PIRSF" id="PIRSF006169">
    <property type="entry name" value="UCP006169"/>
    <property type="match status" value="1"/>
</dbReference>
<dbReference type="SUPFAM" id="SSF118001">
    <property type="entry name" value="YehU-like"/>
    <property type="match status" value="1"/>
</dbReference>
<accession>A4TGW5</accession>
<sequence>MIIPWQQVDSETLDNLLEAFVLREGTDYGEHERSLTEKVADVRRQLVSGEAVLVWSELHETINIMPRGSFRAGAEEQQ</sequence>
<organism>
    <name type="scientific">Yersinia pestis (strain Pestoides F)</name>
    <dbReference type="NCBI Taxonomy" id="386656"/>
    <lineage>
        <taxon>Bacteria</taxon>
        <taxon>Pseudomonadati</taxon>
        <taxon>Pseudomonadota</taxon>
        <taxon>Gammaproteobacteria</taxon>
        <taxon>Enterobacterales</taxon>
        <taxon>Yersiniaceae</taxon>
        <taxon>Yersinia</taxon>
    </lineage>
</organism>
<name>Y104_YERPP</name>
<comment type="similarity">
    <text evidence="1">Belongs to the UPF0270 family.</text>
</comment>